<feature type="chain" id="PRO_0000159177" description="Zinc-containing ferredoxin">
    <location>
        <begin position="1"/>
        <end position="103"/>
    </location>
</feature>
<feature type="domain" description="4Fe-4S ferredoxin-type 1" evidence="2">
    <location>
        <begin position="35"/>
        <end position="65"/>
    </location>
</feature>
<feature type="domain" description="4Fe-4S ferredoxin-type 2" evidence="2">
    <location>
        <begin position="74"/>
        <end position="103"/>
    </location>
</feature>
<feature type="region of interest" description="N-terminal extension">
    <location>
        <begin position="1"/>
        <end position="36"/>
    </location>
</feature>
<feature type="binding site" evidence="1">
    <location>
        <position position="19"/>
    </location>
    <ligand>
        <name>Zn(2+)</name>
        <dbReference type="ChEBI" id="CHEBI:29105"/>
    </ligand>
</feature>
<feature type="binding site" evidence="1">
    <location>
        <position position="34"/>
    </location>
    <ligand>
        <name>Zn(2+)</name>
        <dbReference type="ChEBI" id="CHEBI:29105"/>
    </ligand>
</feature>
<feature type="binding site" evidence="1">
    <location>
        <position position="45"/>
    </location>
    <ligand>
        <name>[3Fe-4S] cluster</name>
        <dbReference type="ChEBI" id="CHEBI:21137"/>
    </ligand>
</feature>
<feature type="binding site" evidence="1">
    <location>
        <position position="51"/>
    </location>
    <ligand>
        <name>[3Fe-4S] cluster</name>
        <dbReference type="ChEBI" id="CHEBI:21137"/>
    </ligand>
</feature>
<feature type="binding site" evidence="1">
    <location>
        <position position="55"/>
    </location>
    <ligand>
        <name>[4Fe-4S] cluster</name>
        <dbReference type="ChEBI" id="CHEBI:49883"/>
    </ligand>
</feature>
<feature type="binding site" evidence="1">
    <location>
        <position position="76"/>
    </location>
    <ligand>
        <name>Zn(2+)</name>
        <dbReference type="ChEBI" id="CHEBI:29105"/>
    </ligand>
</feature>
<feature type="binding site" evidence="1">
    <location>
        <position position="83"/>
    </location>
    <ligand>
        <name>[4Fe-4S] cluster</name>
        <dbReference type="ChEBI" id="CHEBI:49883"/>
    </ligand>
</feature>
<feature type="binding site" evidence="1">
    <location>
        <position position="86"/>
    </location>
    <ligand>
        <name>[4Fe-4S] cluster</name>
        <dbReference type="ChEBI" id="CHEBI:49883"/>
    </ligand>
</feature>
<feature type="binding site" evidence="1">
    <location>
        <position position="89"/>
    </location>
    <ligand>
        <name>[4Fe-4S] cluster</name>
        <dbReference type="ChEBI" id="CHEBI:49883"/>
    </ligand>
</feature>
<feature type="binding site" evidence="1">
    <location>
        <position position="93"/>
    </location>
    <ligand>
        <name>[3Fe-4S] cluster</name>
        <dbReference type="ChEBI" id="CHEBI:21137"/>
    </ligand>
</feature>
<feature type="modified residue" description="N6-methyllysine" evidence="3">
    <location>
        <position position="29"/>
    </location>
</feature>
<feature type="sequence conflict" description="In Ref. 1; AA sequence." evidence="4" ref="1">
    <original>S</original>
    <variation>H</variation>
    <location>
        <position position="9"/>
    </location>
</feature>
<feature type="sequence conflict" description="In Ref. 1; AA sequence." evidence="4" ref="1">
    <original>H</original>
    <variation>S</variation>
    <location>
        <position position="16"/>
    </location>
</feature>
<feature type="sequence conflict" description="In Ref. 1; AA sequence." evidence="4" ref="1">
    <original>E</original>
    <variation>Q</variation>
    <location>
        <position position="80"/>
    </location>
</feature>
<accession>P00219</accession>
<accession>Q4JBG2</accession>
<organism>
    <name type="scientific">Sulfolobus acidocaldarius (strain ATCC 33909 / DSM 639 / JCM 8929 / NBRC 15157 / NCIMB 11770)</name>
    <dbReference type="NCBI Taxonomy" id="330779"/>
    <lineage>
        <taxon>Archaea</taxon>
        <taxon>Thermoproteota</taxon>
        <taxon>Thermoprotei</taxon>
        <taxon>Sulfolobales</taxon>
        <taxon>Sulfolobaceae</taxon>
        <taxon>Sulfolobus</taxon>
    </lineage>
</organism>
<evidence type="ECO:0000250" key="1"/>
<evidence type="ECO:0000255" key="2">
    <source>
        <dbReference type="PROSITE-ProRule" id="PRU00711"/>
    </source>
</evidence>
<evidence type="ECO:0000269" key="3">
    <source>
    </source>
</evidence>
<evidence type="ECO:0000305" key="4"/>
<protein>
    <recommendedName>
        <fullName>Zinc-containing ferredoxin</fullName>
    </recommendedName>
</protein>
<name>FER_SULAC</name>
<dbReference type="EMBL" id="CP000077">
    <property type="protein sequence ID" value="AAY79867.1"/>
    <property type="molecule type" value="Genomic_DNA"/>
</dbReference>
<dbReference type="PIR" id="A00223">
    <property type="entry name" value="FEUC"/>
</dbReference>
<dbReference type="RefSeq" id="WP_011277369.1">
    <property type="nucleotide sequence ID" value="NZ_CP046615.1"/>
</dbReference>
<dbReference type="SMR" id="P00219"/>
<dbReference type="STRING" id="330779.Saci_0456"/>
<dbReference type="iPTMnet" id="P00219"/>
<dbReference type="KEGG" id="sai:Saci_0456"/>
<dbReference type="PATRIC" id="fig|330779.12.peg.454"/>
<dbReference type="eggNOG" id="arCOG04548">
    <property type="taxonomic scope" value="Archaea"/>
</dbReference>
<dbReference type="HOGENOM" id="CLU_178207_0_0_2"/>
<dbReference type="Proteomes" id="UP000001018">
    <property type="component" value="Chromosome"/>
</dbReference>
<dbReference type="GO" id="GO:0051538">
    <property type="term" value="F:3 iron, 4 sulfur cluster binding"/>
    <property type="evidence" value="ECO:0007669"/>
    <property type="project" value="UniProtKB-KW"/>
</dbReference>
<dbReference type="GO" id="GO:0051539">
    <property type="term" value="F:4 iron, 4 sulfur cluster binding"/>
    <property type="evidence" value="ECO:0007669"/>
    <property type="project" value="UniProtKB-KW"/>
</dbReference>
<dbReference type="GO" id="GO:0009055">
    <property type="term" value="F:electron transfer activity"/>
    <property type="evidence" value="ECO:0007669"/>
    <property type="project" value="InterPro"/>
</dbReference>
<dbReference type="GO" id="GO:0016491">
    <property type="term" value="F:oxidoreductase activity"/>
    <property type="evidence" value="ECO:0007669"/>
    <property type="project" value="UniProtKB-ARBA"/>
</dbReference>
<dbReference type="GO" id="GO:0008270">
    <property type="term" value="F:zinc ion binding"/>
    <property type="evidence" value="ECO:0007669"/>
    <property type="project" value="InterPro"/>
</dbReference>
<dbReference type="Gene3D" id="3.30.70.20">
    <property type="match status" value="1"/>
</dbReference>
<dbReference type="InterPro" id="IPR017896">
    <property type="entry name" value="4Fe4S_Fe-S-bd"/>
</dbReference>
<dbReference type="InterPro" id="IPR017900">
    <property type="entry name" value="4Fe4S_Fe_S_CS"/>
</dbReference>
<dbReference type="InterPro" id="IPR009157">
    <property type="entry name" value="Fd_Zn-bd"/>
</dbReference>
<dbReference type="InterPro" id="IPR050572">
    <property type="entry name" value="Fe-S_Ferredoxin"/>
</dbReference>
<dbReference type="PANTHER" id="PTHR43687">
    <property type="entry name" value="ADENYLYLSULFATE REDUCTASE, BETA SUBUNIT"/>
    <property type="match status" value="1"/>
</dbReference>
<dbReference type="PANTHER" id="PTHR43687:SF6">
    <property type="entry name" value="L-ASPARTATE SEMIALDEHYDE SULFURTRANSFERASE IRON-SULFUR SUBUNIT"/>
    <property type="match status" value="1"/>
</dbReference>
<dbReference type="Pfam" id="PF13237">
    <property type="entry name" value="Fer4_10"/>
    <property type="match status" value="1"/>
</dbReference>
<dbReference type="PIRSF" id="PIRSF000068">
    <property type="entry name" value="Zn_Fdx_Sulfol"/>
    <property type="match status" value="1"/>
</dbReference>
<dbReference type="SUPFAM" id="SSF54862">
    <property type="entry name" value="4Fe-4S ferredoxins"/>
    <property type="match status" value="1"/>
</dbReference>
<dbReference type="PROSITE" id="PS00198">
    <property type="entry name" value="4FE4S_FER_1"/>
    <property type="match status" value="1"/>
</dbReference>
<dbReference type="PROSITE" id="PS51379">
    <property type="entry name" value="4FE4S_FER_2"/>
    <property type="match status" value="2"/>
</dbReference>
<sequence>GIDPNYRTSKPVVGDHSGHKIYGPVESPKVLGVHGTIVGVDFDLCIADGSCITACPVNVFQWYETPGHPASEKKADPVNEQACIFCMACVNVCPVAAIDVKPP</sequence>
<comment type="function">
    <text>Ferredoxins are iron-sulfur proteins that transfer electrons in a wide variety of metabolic reactions.</text>
</comment>
<comment type="cofactor">
    <cofactor evidence="1">
        <name>[3Fe-4S] cluster</name>
        <dbReference type="ChEBI" id="CHEBI:21137"/>
    </cofactor>
    <text evidence="1">Binds 1 [3Fe-4S] cluster.</text>
</comment>
<comment type="cofactor">
    <cofactor evidence="1">
        <name>[4Fe-4S] cluster</name>
        <dbReference type="ChEBI" id="CHEBI:49883"/>
    </cofactor>
    <text evidence="1">Binds 1 [4Fe-4S] cluster.</text>
</comment>
<comment type="cofactor">
    <cofactor evidence="1">
        <name>Zn(2+)</name>
        <dbReference type="ChEBI" id="CHEBI:29105"/>
    </cofactor>
    <text evidence="1">Binds 1 zinc ion.</text>
</comment>
<gene>
    <name type="primary">zfx</name>
    <name type="ordered locus">Saci_0456</name>
</gene>
<reference key="1">
    <citation type="journal article" date="1985" name="J. Biochem.">
        <title>Amino acid sequence of a ferredoxin from thermoacidophilic archaebacterium, Sulfolobus acidocaldarius. Presence of an N6-monomethyllysine and phyletic consideration of archaebacteria.</title>
        <authorList>
            <person name="Minami Y."/>
            <person name="Wakabayashi S."/>
            <person name="Wada K."/>
            <person name="Matsubara H."/>
            <person name="Kerscher L."/>
            <person name="Oesterhelt D."/>
        </authorList>
    </citation>
    <scope>PROTEIN SEQUENCE</scope>
    <scope>METHYLATION AT LYS-29</scope>
    <source>
        <strain>ATCC 33909 / DSM 639 / JCM 8929 / NBRC 15157 / NCIMB 11770</strain>
    </source>
</reference>
<reference key="2">
    <citation type="journal article" date="2005" name="J. Bacteriol.">
        <title>The genome of Sulfolobus acidocaldarius, a model organism of the Crenarchaeota.</title>
        <authorList>
            <person name="Chen L."/>
            <person name="Bruegger K."/>
            <person name="Skovgaard M."/>
            <person name="Redder P."/>
            <person name="She Q."/>
            <person name="Torarinsson E."/>
            <person name="Greve B."/>
            <person name="Awayez M."/>
            <person name="Zibat A."/>
            <person name="Klenk H.-P."/>
            <person name="Garrett R.A."/>
        </authorList>
    </citation>
    <scope>NUCLEOTIDE SEQUENCE [LARGE SCALE GENOMIC DNA]</scope>
    <source>
        <strain>ATCC 33909 / DSM 639 / JCM 8929 / NBRC 15157 / NCIMB 11770</strain>
    </source>
</reference>
<reference key="3">
    <citation type="journal article" date="1995" name="Eur. J. Biochem.">
        <title>Identification of the iron-sulfur clusters in a ferredoxin from the archaeon Sulfolobus acidocaldarius. Evidence for a reduced [3Fe-4S] cluster with pH-dependent electronic properties.</title>
        <authorList>
            <person name="Breton J.L."/>
            <person name="Duff J.L."/>
            <person name="Butt J.N."/>
            <person name="Armstrong F.A."/>
            <person name="George S.J."/>
            <person name="Petillot Y."/>
            <person name="Forest E."/>
            <person name="Schafer G."/>
            <person name="Thomson A.J."/>
        </authorList>
    </citation>
    <scope>PROTEIN SEQUENCE OF 1-30</scope>
    <scope>PRESENCE OF A 3FE-4S AND A 4FE-4S CLUSTER</scope>
    <source>
        <strain>ATCC 33909 / DSM 639 / JCM 8929 / NBRC 15157 / NCIMB 11770</strain>
    </source>
</reference>
<keyword id="KW-0003">3Fe-4S</keyword>
<keyword id="KW-0004">4Fe-4S</keyword>
<keyword id="KW-0903">Direct protein sequencing</keyword>
<keyword id="KW-0249">Electron transport</keyword>
<keyword id="KW-0408">Iron</keyword>
<keyword id="KW-0411">Iron-sulfur</keyword>
<keyword id="KW-0479">Metal-binding</keyword>
<keyword id="KW-0488">Methylation</keyword>
<keyword id="KW-1185">Reference proteome</keyword>
<keyword id="KW-0677">Repeat</keyword>
<keyword id="KW-0813">Transport</keyword>
<keyword id="KW-0862">Zinc</keyword>
<proteinExistence type="evidence at protein level"/>